<evidence type="ECO:0000255" key="1"/>
<evidence type="ECO:0000255" key="2">
    <source>
        <dbReference type="PROSITE-ProRule" id="PRU00498"/>
    </source>
</evidence>
<evidence type="ECO:0000269" key="3">
    <source>
    </source>
</evidence>
<evidence type="ECO:0000303" key="4">
    <source>
    </source>
</evidence>
<evidence type="ECO:0000305" key="5"/>
<evidence type="ECO:0000305" key="6">
    <source>
    </source>
</evidence>
<protein>
    <recommendedName>
        <fullName evidence="4">Secreted RxLR effector protein RXLR-C17</fullName>
    </recommendedName>
</protein>
<organism>
    <name type="scientific">Plasmopara halstedii</name>
    <name type="common">Downy mildew of sunflower</name>
    <dbReference type="NCBI Taxonomy" id="4781"/>
    <lineage>
        <taxon>Eukaryota</taxon>
        <taxon>Sar</taxon>
        <taxon>Stramenopiles</taxon>
        <taxon>Oomycota</taxon>
        <taxon>Peronosporales</taxon>
        <taxon>Peronosporaceae</taxon>
        <taxon>Plasmopara</taxon>
    </lineage>
</organism>
<sequence>MREPAFSFRLHLFAAMILLVDVFSALSITTQTFRNVQRHSTDRQLRARDSQAKNYVIRDEERMPLRKLPYDLNLSLSSPPVATLRTALELLYPQAGPSQLWHFEFVTQMKRELSVMQSHPKKLIFDQLIGAMRSMNRNMHMKWNHASDISELSPYTQLILPIALKLRQRLSEGASNDADWMSLLMRLIPYGFLRKEVELLLRTAGYDNVQNYIALYDQMLSKVSAEDTLKFQLLDSNIAPNFQELNKEFLYRSVSLLASKTDGVTADSIVQTTCWSFILIQLTKAKYPQDELQKILEDSMPAEKVVAVMKSYKEGFPNPAHR</sequence>
<name>RLR17_PLAHL</name>
<gene>
    <name evidence="4" type="primary">RXLR-C17</name>
</gene>
<comment type="function">
    <text evidence="3">Secreted effector that suppresses pattern-triggered immunity (PTI) in plant host.</text>
</comment>
<comment type="subcellular location">
    <subcellularLocation>
        <location evidence="3">Secreted</location>
    </subcellularLocation>
    <subcellularLocation>
        <location evidence="3">Host cytoplasm</location>
    </subcellularLocation>
    <subcellularLocation>
        <location evidence="3">Host nucleus</location>
    </subcellularLocation>
</comment>
<comment type="induction">
    <text evidence="3">Expression is up-regulated during plant colonization, 3 days after infection.</text>
</comment>
<comment type="domain">
    <text evidence="6">The RxLR-dEER motif acts to carry the protein into the host cell cytoplasm through binding to cell surface phosphatidylinositol-3-phosphate.</text>
</comment>
<comment type="similarity">
    <text evidence="5">Belongs to the RxLR effector family.</text>
</comment>
<feature type="signal peptide" evidence="1">
    <location>
        <begin position="1"/>
        <end position="25"/>
    </location>
</feature>
<feature type="chain" id="PRO_5006059204" description="Secreted RxLR effector protein RXLR-C17">
    <location>
        <begin position="26"/>
        <end position="322"/>
    </location>
</feature>
<feature type="short sequence motif" description="RxLR-dEER" evidence="6">
    <location>
        <begin position="43"/>
        <end position="62"/>
    </location>
</feature>
<feature type="glycosylation site" description="N-linked (GlcNAc...) asparagine" evidence="2">
    <location>
        <position position="73"/>
    </location>
</feature>
<keyword id="KW-0325">Glycoprotein</keyword>
<keyword id="KW-1035">Host cytoplasm</keyword>
<keyword id="KW-1048">Host nucleus</keyword>
<keyword id="KW-1185">Reference proteome</keyword>
<keyword id="KW-0964">Secreted</keyword>
<keyword id="KW-0732">Signal</keyword>
<keyword id="KW-0843">Virulence</keyword>
<dbReference type="EMBL" id="CCYD01003042">
    <property type="protein sequence ID" value="CEG49264.1"/>
    <property type="molecule type" value="Genomic_DNA"/>
</dbReference>
<dbReference type="GlyCosmos" id="A0A0P1B5Z9">
    <property type="glycosylation" value="1 site, No reported glycans"/>
</dbReference>
<dbReference type="EnsemblProtists" id="CEG49264">
    <property type="protein sequence ID" value="CEG49264"/>
    <property type="gene ID" value="CEG49264"/>
</dbReference>
<dbReference type="Proteomes" id="UP000054928">
    <property type="component" value="Unassembled WGS sequence"/>
</dbReference>
<dbReference type="GO" id="GO:0005576">
    <property type="term" value="C:extracellular region"/>
    <property type="evidence" value="ECO:0007669"/>
    <property type="project" value="UniProtKB-SubCell"/>
</dbReference>
<dbReference type="GO" id="GO:0030430">
    <property type="term" value="C:host cell cytoplasm"/>
    <property type="evidence" value="ECO:0007669"/>
    <property type="project" value="UniProtKB-SubCell"/>
</dbReference>
<dbReference type="GO" id="GO:0042025">
    <property type="term" value="C:host cell nucleus"/>
    <property type="evidence" value="ECO:0007669"/>
    <property type="project" value="UniProtKB-SubCell"/>
</dbReference>
<accession>A0A0P1B5Z9</accession>
<reference key="1">
    <citation type="journal article" date="2015" name="BMC Genomics">
        <title>Genome analyses of the sunflower pathogen Plasmopara halstedii provide insights into effector evolution in downy mildews and Phytophthora.</title>
        <authorList>
            <person name="Sharma R."/>
            <person name="Xia X."/>
            <person name="Cano L.M."/>
            <person name="Evangelisti E."/>
            <person name="Kemen E."/>
            <person name="Judelson H."/>
            <person name="Oome S."/>
            <person name="Sambles C."/>
            <person name="van den Hoogen D.J."/>
            <person name="Kitner M."/>
            <person name="Klein J."/>
            <person name="Meijer H.J."/>
            <person name="Spring O."/>
            <person name="Win J."/>
            <person name="Zipper R."/>
            <person name="Bode H.B."/>
            <person name="Govers F."/>
            <person name="Kamoun S."/>
            <person name="Schornack S."/>
            <person name="Studholme D.J."/>
            <person name="Van den Ackerveken G."/>
            <person name="Thines M."/>
        </authorList>
    </citation>
    <scope>NUCLEOTIDE SEQUENCE [LARGE SCALE GENOMIC DNA]</scope>
</reference>
<reference key="2">
    <citation type="journal article" date="2019" name="Plant J.">
        <title>Sunflower resistance to multiple downy mildew pathotypes revealed by recognition of conserved effectors of the oomycete Plasmopara halstedii.</title>
        <authorList>
            <person name="Pecrix Y."/>
            <person name="Buendia L."/>
            <person name="Penouilh-Suzette C."/>
            <person name="Marechaux M."/>
            <person name="Legrand L."/>
            <person name="Bouchez O."/>
            <person name="Rengel D."/>
            <person name="Gouzy J."/>
            <person name="Cottret L."/>
            <person name="Vear F."/>
            <person name="Godiard L."/>
        </authorList>
    </citation>
    <scope>DOMAIN</scope>
    <scope>INDUCTION</scope>
    <scope>FUNCTION</scope>
    <scope>SUBCELLULAR LOCATION</scope>
</reference>
<proteinExistence type="evidence at transcript level"/>